<organism>
    <name type="scientific">Mesomycoplasma hyopneumoniae (strain J / ATCC 25934 / NCTC 10110)</name>
    <name type="common">Mycoplasma hyopneumoniae</name>
    <dbReference type="NCBI Taxonomy" id="262719"/>
    <lineage>
        <taxon>Bacteria</taxon>
        <taxon>Bacillati</taxon>
        <taxon>Mycoplasmatota</taxon>
        <taxon>Mycoplasmoidales</taxon>
        <taxon>Metamycoplasmataceae</taxon>
        <taxon>Mesomycoplasma</taxon>
    </lineage>
</organism>
<gene>
    <name evidence="1" type="primary">rplQ</name>
    <name type="ordered locus">MHJ_0163</name>
</gene>
<evidence type="ECO:0000255" key="1">
    <source>
        <dbReference type="HAMAP-Rule" id="MF_01368"/>
    </source>
</evidence>
<evidence type="ECO:0000305" key="2"/>
<reference key="1">
    <citation type="journal article" date="2005" name="J. Bacteriol.">
        <title>Swine and poultry pathogens: the complete genome sequences of two strains of Mycoplasma hyopneumoniae and a strain of Mycoplasma synoviae.</title>
        <authorList>
            <person name="Vasconcelos A.T.R."/>
            <person name="Ferreira H.B."/>
            <person name="Bizarro C.V."/>
            <person name="Bonatto S.L."/>
            <person name="Carvalho M.O."/>
            <person name="Pinto P.M."/>
            <person name="Almeida D.F."/>
            <person name="Almeida L.G.P."/>
            <person name="Almeida R."/>
            <person name="Alves-Junior L."/>
            <person name="Assuncao E.N."/>
            <person name="Azevedo V.A.C."/>
            <person name="Bogo M.R."/>
            <person name="Brigido M.M."/>
            <person name="Brocchi M."/>
            <person name="Burity H.A."/>
            <person name="Camargo A.A."/>
            <person name="Camargo S.S."/>
            <person name="Carepo M.S."/>
            <person name="Carraro D.M."/>
            <person name="de Mattos Cascardo J.C."/>
            <person name="Castro L.A."/>
            <person name="Cavalcanti G."/>
            <person name="Chemale G."/>
            <person name="Collevatti R.G."/>
            <person name="Cunha C.W."/>
            <person name="Dallagiovanna B."/>
            <person name="Dambros B.P."/>
            <person name="Dellagostin O.A."/>
            <person name="Falcao C."/>
            <person name="Fantinatti-Garboggini F."/>
            <person name="Felipe M.S.S."/>
            <person name="Fiorentin L."/>
            <person name="Franco G.R."/>
            <person name="Freitas N.S.A."/>
            <person name="Frias D."/>
            <person name="Grangeiro T.B."/>
            <person name="Grisard E.C."/>
            <person name="Guimaraes C.T."/>
            <person name="Hungria M."/>
            <person name="Jardim S.N."/>
            <person name="Krieger M.A."/>
            <person name="Laurino J.P."/>
            <person name="Lima L.F.A."/>
            <person name="Lopes M.I."/>
            <person name="Loreto E.L.S."/>
            <person name="Madeira H.M.F."/>
            <person name="Manfio G.P."/>
            <person name="Maranhao A.Q."/>
            <person name="Martinkovics C.T."/>
            <person name="Medeiros S.R.B."/>
            <person name="Moreira M.A.M."/>
            <person name="Neiva M."/>
            <person name="Ramalho-Neto C.E."/>
            <person name="Nicolas M.F."/>
            <person name="Oliveira S.C."/>
            <person name="Paixao R.F.C."/>
            <person name="Pedrosa F.O."/>
            <person name="Pena S.D.J."/>
            <person name="Pereira M."/>
            <person name="Pereira-Ferrari L."/>
            <person name="Piffer I."/>
            <person name="Pinto L.S."/>
            <person name="Potrich D.P."/>
            <person name="Salim A.C.M."/>
            <person name="Santos F.R."/>
            <person name="Schmitt R."/>
            <person name="Schneider M.P.C."/>
            <person name="Schrank A."/>
            <person name="Schrank I.S."/>
            <person name="Schuck A.F."/>
            <person name="Seuanez H.N."/>
            <person name="Silva D.W."/>
            <person name="Silva R."/>
            <person name="Silva S.C."/>
            <person name="Soares C.M.A."/>
            <person name="Souza K.R.L."/>
            <person name="Souza R.C."/>
            <person name="Staats C.C."/>
            <person name="Steffens M.B.R."/>
            <person name="Teixeira S.M.R."/>
            <person name="Urmenyi T.P."/>
            <person name="Vainstein M.H."/>
            <person name="Zuccherato L.W."/>
            <person name="Simpson A.J.G."/>
            <person name="Zaha A."/>
        </authorList>
    </citation>
    <scope>NUCLEOTIDE SEQUENCE [LARGE SCALE GENOMIC DNA]</scope>
    <source>
        <strain>J / ATCC 25934 / NCTC 10110</strain>
    </source>
</reference>
<dbReference type="EMBL" id="AE017243">
    <property type="protein sequence ID" value="AAZ44254.1"/>
    <property type="molecule type" value="Genomic_DNA"/>
</dbReference>
<dbReference type="RefSeq" id="WP_011283961.1">
    <property type="nucleotide sequence ID" value="NC_007295.1"/>
</dbReference>
<dbReference type="SMR" id="Q4AAG7"/>
<dbReference type="GeneID" id="41334466"/>
<dbReference type="KEGG" id="mhj:MHJ_0163"/>
<dbReference type="eggNOG" id="COG0203">
    <property type="taxonomic scope" value="Bacteria"/>
</dbReference>
<dbReference type="HOGENOM" id="CLU_074407_2_2_14"/>
<dbReference type="OrthoDB" id="9809073at2"/>
<dbReference type="Proteomes" id="UP000000548">
    <property type="component" value="Chromosome"/>
</dbReference>
<dbReference type="GO" id="GO:0022625">
    <property type="term" value="C:cytosolic large ribosomal subunit"/>
    <property type="evidence" value="ECO:0007669"/>
    <property type="project" value="TreeGrafter"/>
</dbReference>
<dbReference type="GO" id="GO:0003735">
    <property type="term" value="F:structural constituent of ribosome"/>
    <property type="evidence" value="ECO:0007669"/>
    <property type="project" value="InterPro"/>
</dbReference>
<dbReference type="GO" id="GO:0006412">
    <property type="term" value="P:translation"/>
    <property type="evidence" value="ECO:0007669"/>
    <property type="project" value="UniProtKB-UniRule"/>
</dbReference>
<dbReference type="Gene3D" id="3.90.1030.10">
    <property type="entry name" value="Ribosomal protein L17"/>
    <property type="match status" value="1"/>
</dbReference>
<dbReference type="HAMAP" id="MF_01368">
    <property type="entry name" value="Ribosomal_bL17"/>
    <property type="match status" value="1"/>
</dbReference>
<dbReference type="InterPro" id="IPR000456">
    <property type="entry name" value="Ribosomal_bL17"/>
</dbReference>
<dbReference type="InterPro" id="IPR047859">
    <property type="entry name" value="Ribosomal_bL17_CS"/>
</dbReference>
<dbReference type="InterPro" id="IPR036373">
    <property type="entry name" value="Ribosomal_bL17_sf"/>
</dbReference>
<dbReference type="NCBIfam" id="TIGR00059">
    <property type="entry name" value="L17"/>
    <property type="match status" value="1"/>
</dbReference>
<dbReference type="PANTHER" id="PTHR14413:SF16">
    <property type="entry name" value="LARGE RIBOSOMAL SUBUNIT PROTEIN BL17M"/>
    <property type="match status" value="1"/>
</dbReference>
<dbReference type="PANTHER" id="PTHR14413">
    <property type="entry name" value="RIBOSOMAL PROTEIN L17"/>
    <property type="match status" value="1"/>
</dbReference>
<dbReference type="Pfam" id="PF01196">
    <property type="entry name" value="Ribosomal_L17"/>
    <property type="match status" value="1"/>
</dbReference>
<dbReference type="SUPFAM" id="SSF64263">
    <property type="entry name" value="Prokaryotic ribosomal protein L17"/>
    <property type="match status" value="1"/>
</dbReference>
<dbReference type="PROSITE" id="PS01167">
    <property type="entry name" value="RIBOSOMAL_L17"/>
    <property type="match status" value="1"/>
</dbReference>
<proteinExistence type="inferred from homology"/>
<feature type="chain" id="PRO_1000055875" description="Large ribosomal subunit protein bL17">
    <location>
        <begin position="1"/>
        <end position="120"/>
    </location>
</feature>
<keyword id="KW-0687">Ribonucleoprotein</keyword>
<keyword id="KW-0689">Ribosomal protein</keyword>
<comment type="subunit">
    <text evidence="1">Part of the 50S ribosomal subunit. Contacts protein L32.</text>
</comment>
<comment type="similarity">
    <text evidence="1">Belongs to the bacterial ribosomal protein bL17 family.</text>
</comment>
<sequence>MANPHQIYRHDAAWDRQVFRSLATSLILHGHIKTTLDRAKRLRSVVEKLITKAKKNDLAARRQILSFLYGLKTRDGVKVMPYLFNKVAPRYQERNGGYTRIVRIPSRLGDNSKMAIIELV</sequence>
<accession>Q4AAG7</accession>
<protein>
    <recommendedName>
        <fullName evidence="1">Large ribosomal subunit protein bL17</fullName>
    </recommendedName>
    <alternativeName>
        <fullName evidence="2">50S ribosomal protein L17</fullName>
    </alternativeName>
</protein>
<name>RL17_MESHJ</name>